<protein>
    <recommendedName>
        <fullName evidence="1">N-acetyl-gamma-glutamyl-phosphate reductase</fullName>
        <shortName evidence="1">AGPR</shortName>
        <ecNumber evidence="1">1.2.1.38</ecNumber>
    </recommendedName>
    <alternativeName>
        <fullName evidence="1">N-acetyl-glutamate semialdehyde dehydrogenase</fullName>
        <shortName evidence="1">NAGSA dehydrogenase</shortName>
    </alternativeName>
</protein>
<keyword id="KW-0028">Amino-acid biosynthesis</keyword>
<keyword id="KW-0055">Arginine biosynthesis</keyword>
<keyword id="KW-0963">Cytoplasm</keyword>
<keyword id="KW-0521">NADP</keyword>
<keyword id="KW-0560">Oxidoreductase</keyword>
<sequence>MIKVGIVGGSGYGAIELIRLLQTHPHVTIAHIYSHSKVDEPLKLTFPHLQHIMQHFEALTVDNNDCDVIFFATPAPVSKTCIPPLVEKGIHVIDLSGAFRIKNREIYEAYYKETAAAQDDLNHAIYSISEWQSFDNNGTKLISNPGCFPTATLLALHPLISEKIVDLSSIIIDAKTGVSGAGRSLSQRVHFSEMNENLSAYAIGNHKHKPEIEQYLSIIAGQDVSVIFTPHLVPMTRGILSTIYVKLSSEYTTESLHKLMTSYYANQPFVRIRDIGTFPTTKEVLGSNYCDIGIYVDETTQTAILVSVIDNLVKGASGQAIQNLNILYDFEVTTGLNQSPVYP</sequence>
<proteinExistence type="inferred from homology"/>
<feature type="chain" id="PRO_1000011066" description="N-acetyl-gamma-glutamyl-phosphate reductase">
    <location>
        <begin position="1"/>
        <end position="343"/>
    </location>
</feature>
<feature type="active site" evidence="1">
    <location>
        <position position="147"/>
    </location>
</feature>
<reference key="1">
    <citation type="journal article" date="2006" name="Lancet">
        <title>Complete genome sequence of USA300, an epidemic clone of community-acquired meticillin-resistant Staphylococcus aureus.</title>
        <authorList>
            <person name="Diep B.A."/>
            <person name="Gill S.R."/>
            <person name="Chang R.F."/>
            <person name="Phan T.H."/>
            <person name="Chen J.H."/>
            <person name="Davidson M.G."/>
            <person name="Lin F."/>
            <person name="Lin J."/>
            <person name="Carleton H.A."/>
            <person name="Mongodin E.F."/>
            <person name="Sensabaugh G.F."/>
            <person name="Perdreau-Remington F."/>
        </authorList>
    </citation>
    <scope>NUCLEOTIDE SEQUENCE [LARGE SCALE GENOMIC DNA]</scope>
    <source>
        <strain>USA300</strain>
    </source>
</reference>
<gene>
    <name evidence="1" type="primary">argC</name>
    <name type="ordered locus">SAUSA300_0186</name>
</gene>
<accession>Q2FK78</accession>
<comment type="function">
    <text evidence="1">Catalyzes the NADPH-dependent reduction of N-acetyl-5-glutamyl phosphate to yield N-acetyl-L-glutamate 5-semialdehyde.</text>
</comment>
<comment type="catalytic activity">
    <reaction evidence="1">
        <text>N-acetyl-L-glutamate 5-semialdehyde + phosphate + NADP(+) = N-acetyl-L-glutamyl 5-phosphate + NADPH + H(+)</text>
        <dbReference type="Rhea" id="RHEA:21588"/>
        <dbReference type="ChEBI" id="CHEBI:15378"/>
        <dbReference type="ChEBI" id="CHEBI:29123"/>
        <dbReference type="ChEBI" id="CHEBI:43474"/>
        <dbReference type="ChEBI" id="CHEBI:57783"/>
        <dbReference type="ChEBI" id="CHEBI:57936"/>
        <dbReference type="ChEBI" id="CHEBI:58349"/>
        <dbReference type="EC" id="1.2.1.38"/>
    </reaction>
</comment>
<comment type="pathway">
    <text evidence="1">Amino-acid biosynthesis; L-arginine biosynthesis; N(2)-acetyl-L-ornithine from L-glutamate: step 3/4.</text>
</comment>
<comment type="subcellular location">
    <subcellularLocation>
        <location evidence="1">Cytoplasm</location>
    </subcellularLocation>
</comment>
<comment type="similarity">
    <text evidence="1">Belongs to the NAGSA dehydrogenase family. Type 1 subfamily.</text>
</comment>
<dbReference type="EC" id="1.2.1.38" evidence="1"/>
<dbReference type="EMBL" id="CP000255">
    <property type="protein sequence ID" value="ABD21497.1"/>
    <property type="molecule type" value="Genomic_DNA"/>
</dbReference>
<dbReference type="RefSeq" id="WP_000598483.1">
    <property type="nucleotide sequence ID" value="NZ_CP027476.1"/>
</dbReference>
<dbReference type="SMR" id="Q2FK78"/>
<dbReference type="KEGG" id="saa:SAUSA300_0186"/>
<dbReference type="HOGENOM" id="CLU_006384_0_1_9"/>
<dbReference type="OMA" id="PHLTPMI"/>
<dbReference type="UniPathway" id="UPA00068">
    <property type="reaction ID" value="UER00108"/>
</dbReference>
<dbReference type="Proteomes" id="UP000001939">
    <property type="component" value="Chromosome"/>
</dbReference>
<dbReference type="GO" id="GO:0005737">
    <property type="term" value="C:cytoplasm"/>
    <property type="evidence" value="ECO:0007669"/>
    <property type="project" value="UniProtKB-SubCell"/>
</dbReference>
<dbReference type="GO" id="GO:0003942">
    <property type="term" value="F:N-acetyl-gamma-glutamyl-phosphate reductase activity"/>
    <property type="evidence" value="ECO:0007669"/>
    <property type="project" value="UniProtKB-UniRule"/>
</dbReference>
<dbReference type="GO" id="GO:0051287">
    <property type="term" value="F:NAD binding"/>
    <property type="evidence" value="ECO:0007669"/>
    <property type="project" value="InterPro"/>
</dbReference>
<dbReference type="GO" id="GO:0070401">
    <property type="term" value="F:NADP+ binding"/>
    <property type="evidence" value="ECO:0007669"/>
    <property type="project" value="InterPro"/>
</dbReference>
<dbReference type="GO" id="GO:0006526">
    <property type="term" value="P:L-arginine biosynthetic process"/>
    <property type="evidence" value="ECO:0007669"/>
    <property type="project" value="UniProtKB-UniRule"/>
</dbReference>
<dbReference type="CDD" id="cd23934">
    <property type="entry name" value="AGPR_1_C"/>
    <property type="match status" value="1"/>
</dbReference>
<dbReference type="CDD" id="cd17895">
    <property type="entry name" value="AGPR_1_N"/>
    <property type="match status" value="1"/>
</dbReference>
<dbReference type="FunFam" id="3.30.360.10:FF:000014">
    <property type="entry name" value="N-acetyl-gamma-glutamyl-phosphate reductase"/>
    <property type="match status" value="1"/>
</dbReference>
<dbReference type="Gene3D" id="3.30.360.10">
    <property type="entry name" value="Dihydrodipicolinate Reductase, domain 2"/>
    <property type="match status" value="1"/>
</dbReference>
<dbReference type="Gene3D" id="3.40.50.720">
    <property type="entry name" value="NAD(P)-binding Rossmann-like Domain"/>
    <property type="match status" value="1"/>
</dbReference>
<dbReference type="HAMAP" id="MF_00150">
    <property type="entry name" value="ArgC_type1"/>
    <property type="match status" value="1"/>
</dbReference>
<dbReference type="InterPro" id="IPR023013">
    <property type="entry name" value="AGPR_AS"/>
</dbReference>
<dbReference type="InterPro" id="IPR000706">
    <property type="entry name" value="AGPR_type-1"/>
</dbReference>
<dbReference type="InterPro" id="IPR036291">
    <property type="entry name" value="NAD(P)-bd_dom_sf"/>
</dbReference>
<dbReference type="InterPro" id="IPR050085">
    <property type="entry name" value="NAGSA_dehydrogenase"/>
</dbReference>
<dbReference type="InterPro" id="IPR000534">
    <property type="entry name" value="Semialdehyde_DH_NAD-bd"/>
</dbReference>
<dbReference type="NCBIfam" id="TIGR01850">
    <property type="entry name" value="argC"/>
    <property type="match status" value="1"/>
</dbReference>
<dbReference type="PANTHER" id="PTHR32338:SF10">
    <property type="entry name" value="N-ACETYL-GAMMA-GLUTAMYL-PHOSPHATE REDUCTASE, CHLOROPLASTIC-RELATED"/>
    <property type="match status" value="1"/>
</dbReference>
<dbReference type="PANTHER" id="PTHR32338">
    <property type="entry name" value="N-ACETYL-GAMMA-GLUTAMYL-PHOSPHATE REDUCTASE, CHLOROPLASTIC-RELATED-RELATED"/>
    <property type="match status" value="1"/>
</dbReference>
<dbReference type="Pfam" id="PF01118">
    <property type="entry name" value="Semialdhyde_dh"/>
    <property type="match status" value="1"/>
</dbReference>
<dbReference type="Pfam" id="PF22698">
    <property type="entry name" value="Semialdhyde_dhC_1"/>
    <property type="match status" value="1"/>
</dbReference>
<dbReference type="SMART" id="SM00859">
    <property type="entry name" value="Semialdhyde_dh"/>
    <property type="match status" value="1"/>
</dbReference>
<dbReference type="SUPFAM" id="SSF55347">
    <property type="entry name" value="Glyceraldehyde-3-phosphate dehydrogenase-like, C-terminal domain"/>
    <property type="match status" value="1"/>
</dbReference>
<dbReference type="SUPFAM" id="SSF51735">
    <property type="entry name" value="NAD(P)-binding Rossmann-fold domains"/>
    <property type="match status" value="1"/>
</dbReference>
<dbReference type="PROSITE" id="PS01224">
    <property type="entry name" value="ARGC"/>
    <property type="match status" value="1"/>
</dbReference>
<evidence type="ECO:0000255" key="1">
    <source>
        <dbReference type="HAMAP-Rule" id="MF_00150"/>
    </source>
</evidence>
<name>ARGC_STAA3</name>
<organism>
    <name type="scientific">Staphylococcus aureus (strain USA300)</name>
    <dbReference type="NCBI Taxonomy" id="367830"/>
    <lineage>
        <taxon>Bacteria</taxon>
        <taxon>Bacillati</taxon>
        <taxon>Bacillota</taxon>
        <taxon>Bacilli</taxon>
        <taxon>Bacillales</taxon>
        <taxon>Staphylococcaceae</taxon>
        <taxon>Staphylococcus</taxon>
    </lineage>
</organism>